<feature type="signal peptide" evidence="4">
    <location>
        <begin position="1"/>
        <end position="21"/>
    </location>
</feature>
<feature type="chain" id="PRO_0000316174" description="Short neurotoxin 3FTx-Oxy3">
    <location>
        <begin position="22"/>
        <end position="83"/>
    </location>
</feature>
<feature type="disulfide bond" evidence="2">
    <location>
        <begin position="24"/>
        <end position="45"/>
    </location>
</feature>
<feature type="disulfide bond" evidence="2">
    <location>
        <begin position="38"/>
        <end position="62"/>
    </location>
</feature>
<feature type="disulfide bond" evidence="2">
    <location>
        <begin position="64"/>
        <end position="75"/>
    </location>
</feature>
<feature type="disulfide bond" evidence="2">
    <location>
        <begin position="76"/>
        <end position="81"/>
    </location>
</feature>
<accession>A7X4R5</accession>
<evidence type="ECO:0000250" key="1"/>
<evidence type="ECO:0000250" key="2">
    <source>
        <dbReference type="UniProtKB" id="P0C1Z0"/>
    </source>
</evidence>
<evidence type="ECO:0000250" key="3">
    <source>
        <dbReference type="UniProtKB" id="P60775"/>
    </source>
</evidence>
<evidence type="ECO:0000255" key="4"/>
<evidence type="ECO:0000305" key="5"/>
<comment type="function">
    <text evidence="3">Binds to muscle nicotinic acetylcholine receptor (nAChR) and inhibit acetylcholine from binding to the receptor, thereby impairing neuromuscular transmission.</text>
</comment>
<comment type="subcellular location">
    <subcellularLocation>
        <location evidence="1">Secreted</location>
    </subcellularLocation>
</comment>
<comment type="tissue specificity">
    <text evidence="5">Expressed by the venom gland.</text>
</comment>
<comment type="similarity">
    <text evidence="5">Belongs to the three-finger toxin family. Short-chain subfamily. Type I alpha-neurotoxin sub-subfamily.</text>
</comment>
<organism>
    <name type="scientific">Oxyuranus microlepidotus</name>
    <name type="common">Inland taipan</name>
    <name type="synonym">Diemenia microlepidota</name>
    <dbReference type="NCBI Taxonomy" id="111177"/>
    <lineage>
        <taxon>Eukaryota</taxon>
        <taxon>Metazoa</taxon>
        <taxon>Chordata</taxon>
        <taxon>Craniata</taxon>
        <taxon>Vertebrata</taxon>
        <taxon>Euteleostomi</taxon>
        <taxon>Lepidosauria</taxon>
        <taxon>Squamata</taxon>
        <taxon>Bifurcata</taxon>
        <taxon>Unidentata</taxon>
        <taxon>Episquamata</taxon>
        <taxon>Toxicofera</taxon>
        <taxon>Serpentes</taxon>
        <taxon>Colubroidea</taxon>
        <taxon>Elapidae</taxon>
        <taxon>Hydrophiinae</taxon>
        <taxon>Oxyuranus</taxon>
    </lineage>
</organism>
<keyword id="KW-0008">Acetylcholine receptor inhibiting toxin</keyword>
<keyword id="KW-1015">Disulfide bond</keyword>
<keyword id="KW-0872">Ion channel impairing toxin</keyword>
<keyword id="KW-0528">Neurotoxin</keyword>
<keyword id="KW-0629">Postsynaptic neurotoxin</keyword>
<keyword id="KW-0964">Secreted</keyword>
<keyword id="KW-0732">Signal</keyword>
<keyword id="KW-0800">Toxin</keyword>
<name>3S13_OXYMI</name>
<proteinExistence type="inferred from homology"/>
<protein>
    <recommendedName>
        <fullName>Short neurotoxin 3FTx-Oxy3</fullName>
    </recommendedName>
</protein>
<dbReference type="EMBL" id="EU029751">
    <property type="protein sequence ID" value="ABU68551.1"/>
    <property type="molecule type" value="mRNA"/>
</dbReference>
<dbReference type="SMR" id="A7X4R5"/>
<dbReference type="GO" id="GO:0005576">
    <property type="term" value="C:extracellular region"/>
    <property type="evidence" value="ECO:0007669"/>
    <property type="project" value="UniProtKB-SubCell"/>
</dbReference>
<dbReference type="GO" id="GO:0030550">
    <property type="term" value="F:acetylcholine receptor inhibitor activity"/>
    <property type="evidence" value="ECO:0007669"/>
    <property type="project" value="UniProtKB-KW"/>
</dbReference>
<dbReference type="GO" id="GO:0099106">
    <property type="term" value="F:ion channel regulator activity"/>
    <property type="evidence" value="ECO:0007669"/>
    <property type="project" value="UniProtKB-KW"/>
</dbReference>
<dbReference type="GO" id="GO:0090729">
    <property type="term" value="F:toxin activity"/>
    <property type="evidence" value="ECO:0007669"/>
    <property type="project" value="UniProtKB-KW"/>
</dbReference>
<dbReference type="CDD" id="cd00206">
    <property type="entry name" value="TFP_snake_toxin"/>
    <property type="match status" value="1"/>
</dbReference>
<dbReference type="FunFam" id="2.10.60.10:FF:000024">
    <property type="entry name" value="Cytotoxin 1"/>
    <property type="match status" value="1"/>
</dbReference>
<dbReference type="Gene3D" id="2.10.60.10">
    <property type="entry name" value="CD59"/>
    <property type="match status" value="1"/>
</dbReference>
<dbReference type="InterPro" id="IPR003571">
    <property type="entry name" value="Snake_3FTx"/>
</dbReference>
<dbReference type="InterPro" id="IPR045860">
    <property type="entry name" value="Snake_toxin-like_sf"/>
</dbReference>
<dbReference type="InterPro" id="IPR018354">
    <property type="entry name" value="Snake_toxin_con_site"/>
</dbReference>
<dbReference type="InterPro" id="IPR054131">
    <property type="entry name" value="Toxin_cobra-type"/>
</dbReference>
<dbReference type="Pfam" id="PF21947">
    <property type="entry name" value="Toxin_cobra-type"/>
    <property type="match status" value="1"/>
</dbReference>
<dbReference type="SUPFAM" id="SSF57302">
    <property type="entry name" value="Snake toxin-like"/>
    <property type="match status" value="1"/>
</dbReference>
<dbReference type="PROSITE" id="PS00272">
    <property type="entry name" value="SNAKE_TOXIN"/>
    <property type="match status" value="1"/>
</dbReference>
<reference key="1">
    <citation type="journal article" date="2008" name="Mol. Cell. Proteomics">
        <title>Evolution of an arsenal: structural and functional diversification of the venom system in the advanced snakes (Caenophidia).</title>
        <authorList>
            <person name="Fry B.G."/>
            <person name="Scheib H."/>
            <person name="van der Weerd L."/>
            <person name="Young B."/>
            <person name="McNaughtan J."/>
            <person name="Ramjan S.F.R."/>
            <person name="Vidal N."/>
            <person name="Poelmann R.E."/>
            <person name="Norman J.A."/>
        </authorList>
    </citation>
    <scope>NUCLEOTIDE SEQUENCE [LARGE SCALE MRNA]</scope>
    <source>
        <tissue>Venom gland</tissue>
    </source>
</reference>
<sequence>MKTLLLTLVVVTIVCLDLGYTMTCYNQQSSQAKTTTTCSGGVSSCYRKTWSDIRGTIIERGCGCPSVKKGIERICCGTDKCNN</sequence>